<protein>
    <recommendedName>
        <fullName evidence="1">UDP-N-acetylglucosamine--N-acetylmuramyl-(pentapeptide) pyrophosphoryl-undecaprenol N-acetylglucosamine transferase</fullName>
        <ecNumber evidence="1">2.4.1.227</ecNumber>
    </recommendedName>
    <alternativeName>
        <fullName evidence="1">Undecaprenyl-PP-MurNAc-pentapeptide-UDPGlcNAc GlcNAc transferase</fullName>
    </alternativeName>
</protein>
<name>MURG_LACJO</name>
<evidence type="ECO:0000255" key="1">
    <source>
        <dbReference type="HAMAP-Rule" id="MF_00033"/>
    </source>
</evidence>
<feature type="chain" id="PRO_0000225061" description="UDP-N-acetylglucosamine--N-acetylmuramyl-(pentapeptide) pyrophosphoryl-undecaprenol N-acetylglucosamine transferase">
    <location>
        <begin position="1"/>
        <end position="370"/>
    </location>
</feature>
<feature type="binding site" evidence="1">
    <location>
        <begin position="10"/>
        <end position="12"/>
    </location>
    <ligand>
        <name>UDP-N-acetyl-alpha-D-glucosamine</name>
        <dbReference type="ChEBI" id="CHEBI:57705"/>
    </ligand>
</feature>
<feature type="binding site" evidence="1">
    <location>
        <position position="126"/>
    </location>
    <ligand>
        <name>UDP-N-acetyl-alpha-D-glucosamine</name>
        <dbReference type="ChEBI" id="CHEBI:57705"/>
    </ligand>
</feature>
<feature type="binding site" evidence="1">
    <location>
        <position position="200"/>
    </location>
    <ligand>
        <name>UDP-N-acetyl-alpha-D-glucosamine</name>
        <dbReference type="ChEBI" id="CHEBI:57705"/>
    </ligand>
</feature>
<feature type="binding site" evidence="1">
    <location>
        <position position="255"/>
    </location>
    <ligand>
        <name>UDP-N-acetyl-alpha-D-glucosamine</name>
        <dbReference type="ChEBI" id="CHEBI:57705"/>
    </ligand>
</feature>
<feature type="binding site" evidence="1">
    <location>
        <position position="300"/>
    </location>
    <ligand>
        <name>UDP-N-acetyl-alpha-D-glucosamine</name>
        <dbReference type="ChEBI" id="CHEBI:57705"/>
    </ligand>
</feature>
<proteinExistence type="inferred from homology"/>
<keyword id="KW-0131">Cell cycle</keyword>
<keyword id="KW-0132">Cell division</keyword>
<keyword id="KW-1003">Cell membrane</keyword>
<keyword id="KW-0133">Cell shape</keyword>
<keyword id="KW-0961">Cell wall biogenesis/degradation</keyword>
<keyword id="KW-0328">Glycosyltransferase</keyword>
<keyword id="KW-0472">Membrane</keyword>
<keyword id="KW-0573">Peptidoglycan synthesis</keyword>
<keyword id="KW-0808">Transferase</keyword>
<gene>
    <name evidence="1" type="primary">murG</name>
    <name type="ordered locus">LJ_0972</name>
</gene>
<comment type="function">
    <text evidence="1">Cell wall formation. Catalyzes the transfer of a GlcNAc subunit on undecaprenyl-pyrophosphoryl-MurNAc-pentapeptide (lipid intermediate I) to form undecaprenyl-pyrophosphoryl-MurNAc-(pentapeptide)GlcNAc (lipid intermediate II).</text>
</comment>
<comment type="catalytic activity">
    <reaction evidence="1">
        <text>Mur2Ac(oyl-L-Ala-gamma-D-Glu-L-Lys-D-Ala-D-Ala)-di-trans,octa-cis-undecaprenyl diphosphate + UDP-N-acetyl-alpha-D-glucosamine = beta-D-GlcNAc-(1-&gt;4)-Mur2Ac(oyl-L-Ala-gamma-D-Glu-L-Lys-D-Ala-D-Ala)-di-trans,octa-cis-undecaprenyl diphosphate + UDP + H(+)</text>
        <dbReference type="Rhea" id="RHEA:23192"/>
        <dbReference type="ChEBI" id="CHEBI:15378"/>
        <dbReference type="ChEBI" id="CHEBI:57705"/>
        <dbReference type="ChEBI" id="CHEBI:58223"/>
        <dbReference type="ChEBI" id="CHEBI:60032"/>
        <dbReference type="ChEBI" id="CHEBI:60033"/>
        <dbReference type="EC" id="2.4.1.227"/>
    </reaction>
</comment>
<comment type="pathway">
    <text evidence="1">Cell wall biogenesis; peptidoglycan biosynthesis.</text>
</comment>
<comment type="subcellular location">
    <subcellularLocation>
        <location evidence="1">Cell membrane</location>
        <topology evidence="1">Peripheral membrane protein</topology>
        <orientation evidence="1">Cytoplasmic side</orientation>
    </subcellularLocation>
</comment>
<comment type="similarity">
    <text evidence="1">Belongs to the glycosyltransferase 28 family. MurG subfamily.</text>
</comment>
<dbReference type="EC" id="2.4.1.227" evidence="1"/>
<dbReference type="EMBL" id="AE017198">
    <property type="protein sequence ID" value="AAS08793.1"/>
    <property type="molecule type" value="Genomic_DNA"/>
</dbReference>
<dbReference type="RefSeq" id="WP_004894244.1">
    <property type="nucleotide sequence ID" value="NC_005362.1"/>
</dbReference>
<dbReference type="SMR" id="Q74JY4"/>
<dbReference type="CAZy" id="GT28">
    <property type="family name" value="Glycosyltransferase Family 28"/>
</dbReference>
<dbReference type="KEGG" id="ljo:LJ_0972"/>
<dbReference type="eggNOG" id="COG0707">
    <property type="taxonomic scope" value="Bacteria"/>
</dbReference>
<dbReference type="HOGENOM" id="CLU_037404_0_1_9"/>
<dbReference type="UniPathway" id="UPA00219"/>
<dbReference type="Proteomes" id="UP000000581">
    <property type="component" value="Chromosome"/>
</dbReference>
<dbReference type="GO" id="GO:0005886">
    <property type="term" value="C:plasma membrane"/>
    <property type="evidence" value="ECO:0007669"/>
    <property type="project" value="UniProtKB-SubCell"/>
</dbReference>
<dbReference type="GO" id="GO:0050511">
    <property type="term" value="F:undecaprenyldiphospho-muramoylpentapeptide beta-N-acetylglucosaminyltransferase activity"/>
    <property type="evidence" value="ECO:0007669"/>
    <property type="project" value="UniProtKB-UniRule"/>
</dbReference>
<dbReference type="GO" id="GO:0005975">
    <property type="term" value="P:carbohydrate metabolic process"/>
    <property type="evidence" value="ECO:0007669"/>
    <property type="project" value="InterPro"/>
</dbReference>
<dbReference type="GO" id="GO:0051301">
    <property type="term" value="P:cell division"/>
    <property type="evidence" value="ECO:0007669"/>
    <property type="project" value="UniProtKB-KW"/>
</dbReference>
<dbReference type="GO" id="GO:0071555">
    <property type="term" value="P:cell wall organization"/>
    <property type="evidence" value="ECO:0007669"/>
    <property type="project" value="UniProtKB-KW"/>
</dbReference>
<dbReference type="GO" id="GO:0030259">
    <property type="term" value="P:lipid glycosylation"/>
    <property type="evidence" value="ECO:0007669"/>
    <property type="project" value="UniProtKB-UniRule"/>
</dbReference>
<dbReference type="GO" id="GO:0009252">
    <property type="term" value="P:peptidoglycan biosynthetic process"/>
    <property type="evidence" value="ECO:0007669"/>
    <property type="project" value="UniProtKB-UniRule"/>
</dbReference>
<dbReference type="GO" id="GO:0008360">
    <property type="term" value="P:regulation of cell shape"/>
    <property type="evidence" value="ECO:0007669"/>
    <property type="project" value="UniProtKB-KW"/>
</dbReference>
<dbReference type="CDD" id="cd03785">
    <property type="entry name" value="GT28_MurG"/>
    <property type="match status" value="1"/>
</dbReference>
<dbReference type="Gene3D" id="3.40.50.2000">
    <property type="entry name" value="Glycogen Phosphorylase B"/>
    <property type="match status" value="2"/>
</dbReference>
<dbReference type="HAMAP" id="MF_00033">
    <property type="entry name" value="MurG"/>
    <property type="match status" value="1"/>
</dbReference>
<dbReference type="InterPro" id="IPR006009">
    <property type="entry name" value="GlcNAc_MurG"/>
</dbReference>
<dbReference type="InterPro" id="IPR007235">
    <property type="entry name" value="Glyco_trans_28_C"/>
</dbReference>
<dbReference type="InterPro" id="IPR004276">
    <property type="entry name" value="GlycoTrans_28_N"/>
</dbReference>
<dbReference type="NCBIfam" id="TIGR01133">
    <property type="entry name" value="murG"/>
    <property type="match status" value="1"/>
</dbReference>
<dbReference type="PANTHER" id="PTHR21015:SF22">
    <property type="entry name" value="GLYCOSYLTRANSFERASE"/>
    <property type="match status" value="1"/>
</dbReference>
<dbReference type="PANTHER" id="PTHR21015">
    <property type="entry name" value="UDP-N-ACETYLGLUCOSAMINE--N-ACETYLMURAMYL-(PENTAPEPTIDE) PYROPHOSPHORYL-UNDECAPRENOL N-ACETYLGLUCOSAMINE TRANSFERASE 1"/>
    <property type="match status" value="1"/>
</dbReference>
<dbReference type="Pfam" id="PF04101">
    <property type="entry name" value="Glyco_tran_28_C"/>
    <property type="match status" value="1"/>
</dbReference>
<dbReference type="Pfam" id="PF03033">
    <property type="entry name" value="Glyco_transf_28"/>
    <property type="match status" value="1"/>
</dbReference>
<dbReference type="SUPFAM" id="SSF53756">
    <property type="entry name" value="UDP-Glycosyltransferase/glycogen phosphorylase"/>
    <property type="match status" value="1"/>
</dbReference>
<organism>
    <name type="scientific">Lactobacillus johnsonii (strain CNCM I-12250 / La1 / NCC 533)</name>
    <dbReference type="NCBI Taxonomy" id="257314"/>
    <lineage>
        <taxon>Bacteria</taxon>
        <taxon>Bacillati</taxon>
        <taxon>Bacillota</taxon>
        <taxon>Bacilli</taxon>
        <taxon>Lactobacillales</taxon>
        <taxon>Lactobacillaceae</taxon>
        <taxon>Lactobacillus</taxon>
    </lineage>
</organism>
<reference key="1">
    <citation type="journal article" date="2004" name="Proc. Natl. Acad. Sci. U.S.A.">
        <title>The genome sequence of the probiotic intestinal bacterium Lactobacillus johnsonii NCC 533.</title>
        <authorList>
            <person name="Pridmore R.D."/>
            <person name="Berger B."/>
            <person name="Desiere F."/>
            <person name="Vilanova D."/>
            <person name="Barretto C."/>
            <person name="Pittet A.-C."/>
            <person name="Zwahlen M.-C."/>
            <person name="Rouvet M."/>
            <person name="Altermann E."/>
            <person name="Barrangou R."/>
            <person name="Mollet B."/>
            <person name="Mercenier A."/>
            <person name="Klaenhammer T."/>
            <person name="Arigoni F."/>
            <person name="Schell M.A."/>
        </authorList>
    </citation>
    <scope>NUCLEOTIDE SEQUENCE [LARGE SCALE GENOMIC DNA]</scope>
    <source>
        <strain>CNCM I-1225 / La1 / NCC 533</strain>
    </source>
</reference>
<sequence length="370" mass="40543">MRVIFSGGGTGGHIYPIMALIERLKERKLVTNDEILFVGTDRGLESKIVPAAGVPFKTLKIKGFDRKHPLKNFETIELFIKATKEAKQIIKNFKPDVVVGTGGYVSGAIVYEAAKMHVPTIIHESNSVVGLANKFLAHYVDKICYTFDDAAKQFSEKKKLVKTGNPRSQQVLGLNKENIDIAKKWDLNPNMPTVLIFGGSRGALAINQIVEKSLSELETKPYQVIWATGQLYYGDVKKKLAGKEVNSNIKIVPYIDNMPGLLPQMTCVVARSGATSLAEFTALGVPVILIPSPNVTHNHQMKNALDMEKAGAALVIAENDLNPNNFVSSIDHILLDTNYAKKMSEASKKLGVPDASDQVISVMESLIKNK</sequence>
<accession>Q74JY4</accession>